<gene>
    <name evidence="1" type="primary">groEL</name>
    <name evidence="1" type="synonym">groL</name>
    <name type="ordered locus">PSPTO_4376</name>
</gene>
<protein>
    <recommendedName>
        <fullName evidence="1">Chaperonin GroEL</fullName>
        <ecNumber evidence="1">5.6.1.7</ecNumber>
    </recommendedName>
    <alternativeName>
        <fullName evidence="1">60 kDa chaperonin</fullName>
    </alternativeName>
    <alternativeName>
        <fullName evidence="1">Chaperonin-60</fullName>
        <shortName evidence="1">Cpn60</shortName>
    </alternativeName>
</protein>
<organism>
    <name type="scientific">Pseudomonas syringae pv. tomato (strain ATCC BAA-871 / DC3000)</name>
    <dbReference type="NCBI Taxonomy" id="223283"/>
    <lineage>
        <taxon>Bacteria</taxon>
        <taxon>Pseudomonadati</taxon>
        <taxon>Pseudomonadota</taxon>
        <taxon>Gammaproteobacteria</taxon>
        <taxon>Pseudomonadales</taxon>
        <taxon>Pseudomonadaceae</taxon>
        <taxon>Pseudomonas</taxon>
    </lineage>
</organism>
<evidence type="ECO:0000255" key="1">
    <source>
        <dbReference type="HAMAP-Rule" id="MF_00600"/>
    </source>
</evidence>
<sequence>MAAKEVKFGDAGRKKMLAGVNVLADAVKATLGPKGRNVIIEKSFGAPLITKDGVSVAKEIELKDRFENMGAQLVKDVASRANDDAGDGTTTATVLAQAIVNEGLKAVAAGMNPMDLKRGIDKATIAIVAELKKLSKPCTDTKAIAQVGTISANSDHSIGDIIAEAMEKVTKDGVITVEEGSGLENELSVVEGMQFDRGYLSPYFINKPDTMVAELDSPLLLLVDKKISNIREMLPVLEAVAKAGRPLLIVAEDVEGEALATLVVNNMRGIVKVAAVKAPGFGDRRKAMLQDIAVLTGGTVISEEIGLSLETTTLEHLGNAKRVILNKENTTIIDGAGVKTDIDSRISQIRQQIGDTSSDYDKEKLQERLAKLSGGVAVIKVGAGSEVEMKEKKARVEDALHATRAAVEEGVVPGGGVALVRSLQAIEGLKGDNADQDVGIALLRRAVEAPLRQIVANSGDEPSVVVDKVKQGSGNFGYNAASGEYGDMIEMGILDPAKVTRSALQAASSIASLMITTEAMIADVADEKAAGGGMPDMGGMGGMGGMM</sequence>
<comment type="function">
    <text evidence="1">Together with its co-chaperonin GroES, plays an essential role in assisting protein folding. The GroEL-GroES system forms a nano-cage that allows encapsulation of the non-native substrate proteins and provides a physical environment optimized to promote and accelerate protein folding.</text>
</comment>
<comment type="catalytic activity">
    <reaction evidence="1">
        <text>ATP + H2O + a folded polypeptide = ADP + phosphate + an unfolded polypeptide.</text>
        <dbReference type="EC" id="5.6.1.7"/>
    </reaction>
</comment>
<comment type="subunit">
    <text evidence="1">Forms a cylinder of 14 subunits composed of two heptameric rings stacked back-to-back. Interacts with the co-chaperonin GroES.</text>
</comment>
<comment type="subcellular location">
    <subcellularLocation>
        <location evidence="1">Cytoplasm</location>
    </subcellularLocation>
</comment>
<comment type="similarity">
    <text evidence="1">Belongs to the chaperonin (HSP60) family.</text>
</comment>
<proteinExistence type="inferred from homology"/>
<accession>Q87X14</accession>
<dbReference type="EC" id="5.6.1.7" evidence="1"/>
<dbReference type="EMBL" id="AE016853">
    <property type="protein sequence ID" value="AAO57826.1"/>
    <property type="molecule type" value="Genomic_DNA"/>
</dbReference>
<dbReference type="RefSeq" id="NP_794131.1">
    <property type="nucleotide sequence ID" value="NC_004578.1"/>
</dbReference>
<dbReference type="RefSeq" id="WP_007246228.1">
    <property type="nucleotide sequence ID" value="NC_004578.1"/>
</dbReference>
<dbReference type="SMR" id="Q87X14"/>
<dbReference type="STRING" id="223283.PSPTO_4376"/>
<dbReference type="GeneID" id="1186057"/>
<dbReference type="KEGG" id="pst:PSPTO_4376"/>
<dbReference type="PATRIC" id="fig|223283.9.peg.4491"/>
<dbReference type="eggNOG" id="COG0459">
    <property type="taxonomic scope" value="Bacteria"/>
</dbReference>
<dbReference type="HOGENOM" id="CLU_016503_3_0_6"/>
<dbReference type="OrthoDB" id="9766614at2"/>
<dbReference type="PhylomeDB" id="Q87X14"/>
<dbReference type="Proteomes" id="UP000002515">
    <property type="component" value="Chromosome"/>
</dbReference>
<dbReference type="GO" id="GO:0005737">
    <property type="term" value="C:cytoplasm"/>
    <property type="evidence" value="ECO:0007669"/>
    <property type="project" value="UniProtKB-SubCell"/>
</dbReference>
<dbReference type="GO" id="GO:0005524">
    <property type="term" value="F:ATP binding"/>
    <property type="evidence" value="ECO:0007669"/>
    <property type="project" value="UniProtKB-UniRule"/>
</dbReference>
<dbReference type="GO" id="GO:0140662">
    <property type="term" value="F:ATP-dependent protein folding chaperone"/>
    <property type="evidence" value="ECO:0007669"/>
    <property type="project" value="InterPro"/>
</dbReference>
<dbReference type="GO" id="GO:0016853">
    <property type="term" value="F:isomerase activity"/>
    <property type="evidence" value="ECO:0007669"/>
    <property type="project" value="UniProtKB-KW"/>
</dbReference>
<dbReference type="GO" id="GO:0051082">
    <property type="term" value="F:unfolded protein binding"/>
    <property type="evidence" value="ECO:0007669"/>
    <property type="project" value="UniProtKB-UniRule"/>
</dbReference>
<dbReference type="GO" id="GO:0042026">
    <property type="term" value="P:protein refolding"/>
    <property type="evidence" value="ECO:0007669"/>
    <property type="project" value="UniProtKB-UniRule"/>
</dbReference>
<dbReference type="CDD" id="cd03344">
    <property type="entry name" value="GroEL"/>
    <property type="match status" value="1"/>
</dbReference>
<dbReference type="FunFam" id="1.10.560.10:FF:000001">
    <property type="entry name" value="60 kDa chaperonin"/>
    <property type="match status" value="1"/>
</dbReference>
<dbReference type="FunFam" id="3.50.7.10:FF:000001">
    <property type="entry name" value="60 kDa chaperonin"/>
    <property type="match status" value="1"/>
</dbReference>
<dbReference type="Gene3D" id="3.50.7.10">
    <property type="entry name" value="GroEL"/>
    <property type="match status" value="1"/>
</dbReference>
<dbReference type="Gene3D" id="1.10.560.10">
    <property type="entry name" value="GroEL-like equatorial domain"/>
    <property type="match status" value="1"/>
</dbReference>
<dbReference type="Gene3D" id="3.30.260.10">
    <property type="entry name" value="TCP-1-like chaperonin intermediate domain"/>
    <property type="match status" value="1"/>
</dbReference>
<dbReference type="HAMAP" id="MF_00600">
    <property type="entry name" value="CH60"/>
    <property type="match status" value="1"/>
</dbReference>
<dbReference type="InterPro" id="IPR018370">
    <property type="entry name" value="Chaperonin_Cpn60_CS"/>
</dbReference>
<dbReference type="InterPro" id="IPR001844">
    <property type="entry name" value="Cpn60/GroEL"/>
</dbReference>
<dbReference type="InterPro" id="IPR002423">
    <property type="entry name" value="Cpn60/GroEL/TCP-1"/>
</dbReference>
<dbReference type="InterPro" id="IPR027409">
    <property type="entry name" value="GroEL-like_apical_dom_sf"/>
</dbReference>
<dbReference type="InterPro" id="IPR027413">
    <property type="entry name" value="GROEL-like_equatorial_sf"/>
</dbReference>
<dbReference type="InterPro" id="IPR027410">
    <property type="entry name" value="TCP-1-like_intermed_sf"/>
</dbReference>
<dbReference type="NCBIfam" id="TIGR02348">
    <property type="entry name" value="GroEL"/>
    <property type="match status" value="1"/>
</dbReference>
<dbReference type="NCBIfam" id="NF000592">
    <property type="entry name" value="PRK00013.1"/>
    <property type="match status" value="1"/>
</dbReference>
<dbReference type="NCBIfam" id="NF009487">
    <property type="entry name" value="PRK12849.1"/>
    <property type="match status" value="1"/>
</dbReference>
<dbReference type="NCBIfam" id="NF009488">
    <property type="entry name" value="PRK12850.1"/>
    <property type="match status" value="1"/>
</dbReference>
<dbReference type="NCBIfam" id="NF009489">
    <property type="entry name" value="PRK12851.1"/>
    <property type="match status" value="1"/>
</dbReference>
<dbReference type="PANTHER" id="PTHR45633">
    <property type="entry name" value="60 KDA HEAT SHOCK PROTEIN, MITOCHONDRIAL"/>
    <property type="match status" value="1"/>
</dbReference>
<dbReference type="Pfam" id="PF00118">
    <property type="entry name" value="Cpn60_TCP1"/>
    <property type="match status" value="1"/>
</dbReference>
<dbReference type="PRINTS" id="PR00298">
    <property type="entry name" value="CHAPERONIN60"/>
</dbReference>
<dbReference type="SUPFAM" id="SSF52029">
    <property type="entry name" value="GroEL apical domain-like"/>
    <property type="match status" value="1"/>
</dbReference>
<dbReference type="SUPFAM" id="SSF48592">
    <property type="entry name" value="GroEL equatorial domain-like"/>
    <property type="match status" value="1"/>
</dbReference>
<dbReference type="SUPFAM" id="SSF54849">
    <property type="entry name" value="GroEL-intermediate domain like"/>
    <property type="match status" value="1"/>
</dbReference>
<dbReference type="PROSITE" id="PS00296">
    <property type="entry name" value="CHAPERONINS_CPN60"/>
    <property type="match status" value="1"/>
</dbReference>
<reference key="1">
    <citation type="journal article" date="2003" name="Proc. Natl. Acad. Sci. U.S.A.">
        <title>The complete genome sequence of the Arabidopsis and tomato pathogen Pseudomonas syringae pv. tomato DC3000.</title>
        <authorList>
            <person name="Buell C.R."/>
            <person name="Joardar V."/>
            <person name="Lindeberg M."/>
            <person name="Selengut J."/>
            <person name="Paulsen I.T."/>
            <person name="Gwinn M.L."/>
            <person name="Dodson R.J."/>
            <person name="DeBoy R.T."/>
            <person name="Durkin A.S."/>
            <person name="Kolonay J.F."/>
            <person name="Madupu R."/>
            <person name="Daugherty S.C."/>
            <person name="Brinkac L.M."/>
            <person name="Beanan M.J."/>
            <person name="Haft D.H."/>
            <person name="Nelson W.C."/>
            <person name="Davidsen T.M."/>
            <person name="Zafar N."/>
            <person name="Zhou L."/>
            <person name="Liu J."/>
            <person name="Yuan Q."/>
            <person name="Khouri H.M."/>
            <person name="Fedorova N.B."/>
            <person name="Tran B."/>
            <person name="Russell D."/>
            <person name="Berry K.J."/>
            <person name="Utterback T.R."/>
            <person name="Van Aken S.E."/>
            <person name="Feldblyum T.V."/>
            <person name="D'Ascenzo M."/>
            <person name="Deng W.-L."/>
            <person name="Ramos A.R."/>
            <person name="Alfano J.R."/>
            <person name="Cartinhour S."/>
            <person name="Chatterjee A.K."/>
            <person name="Delaney T.P."/>
            <person name="Lazarowitz S.G."/>
            <person name="Martin G.B."/>
            <person name="Schneider D.J."/>
            <person name="Tang X."/>
            <person name="Bender C.L."/>
            <person name="White O."/>
            <person name="Fraser C.M."/>
            <person name="Collmer A."/>
        </authorList>
    </citation>
    <scope>NUCLEOTIDE SEQUENCE [LARGE SCALE GENOMIC DNA]</scope>
    <source>
        <strain>ATCC BAA-871 / DC3000</strain>
    </source>
</reference>
<feature type="chain" id="PRO_0000063489" description="Chaperonin GroEL">
    <location>
        <begin position="1"/>
        <end position="547"/>
    </location>
</feature>
<feature type="binding site" evidence="1">
    <location>
        <begin position="30"/>
        <end position="33"/>
    </location>
    <ligand>
        <name>ATP</name>
        <dbReference type="ChEBI" id="CHEBI:30616"/>
    </ligand>
</feature>
<feature type="binding site" evidence="1">
    <location>
        <position position="51"/>
    </location>
    <ligand>
        <name>ATP</name>
        <dbReference type="ChEBI" id="CHEBI:30616"/>
    </ligand>
</feature>
<feature type="binding site" evidence="1">
    <location>
        <begin position="87"/>
        <end position="91"/>
    </location>
    <ligand>
        <name>ATP</name>
        <dbReference type="ChEBI" id="CHEBI:30616"/>
    </ligand>
</feature>
<feature type="binding site" evidence="1">
    <location>
        <position position="415"/>
    </location>
    <ligand>
        <name>ATP</name>
        <dbReference type="ChEBI" id="CHEBI:30616"/>
    </ligand>
</feature>
<feature type="binding site" evidence="1">
    <location>
        <begin position="479"/>
        <end position="481"/>
    </location>
    <ligand>
        <name>ATP</name>
        <dbReference type="ChEBI" id="CHEBI:30616"/>
    </ligand>
</feature>
<feature type="binding site" evidence="1">
    <location>
        <position position="495"/>
    </location>
    <ligand>
        <name>ATP</name>
        <dbReference type="ChEBI" id="CHEBI:30616"/>
    </ligand>
</feature>
<keyword id="KW-0067">ATP-binding</keyword>
<keyword id="KW-0143">Chaperone</keyword>
<keyword id="KW-0963">Cytoplasm</keyword>
<keyword id="KW-0413">Isomerase</keyword>
<keyword id="KW-0547">Nucleotide-binding</keyword>
<keyword id="KW-1185">Reference proteome</keyword>
<name>CH60_PSESM</name>